<name>CH602_ACAM1</name>
<proteinExistence type="inferred from homology"/>
<gene>
    <name evidence="1" type="primary">groEL2</name>
    <name evidence="1" type="synonym">groL2</name>
    <name type="ordered locus">AM1_4411</name>
</gene>
<feature type="chain" id="PRO_0000331959" description="Chaperonin GroEL 2">
    <location>
        <begin position="1"/>
        <end position="543"/>
    </location>
</feature>
<feature type="region of interest" description="Disordered" evidence="2">
    <location>
        <begin position="524"/>
        <end position="543"/>
    </location>
</feature>
<feature type="binding site" evidence="1">
    <location>
        <begin position="29"/>
        <end position="32"/>
    </location>
    <ligand>
        <name>ATP</name>
        <dbReference type="ChEBI" id="CHEBI:30616"/>
    </ligand>
</feature>
<feature type="binding site" evidence="1">
    <location>
        <begin position="86"/>
        <end position="90"/>
    </location>
    <ligand>
        <name>ATP</name>
        <dbReference type="ChEBI" id="CHEBI:30616"/>
    </ligand>
</feature>
<feature type="binding site" evidence="1">
    <location>
        <position position="413"/>
    </location>
    <ligand>
        <name>ATP</name>
        <dbReference type="ChEBI" id="CHEBI:30616"/>
    </ligand>
</feature>
<feature type="binding site" evidence="1">
    <location>
        <position position="495"/>
    </location>
    <ligand>
        <name>ATP</name>
        <dbReference type="ChEBI" id="CHEBI:30616"/>
    </ligand>
</feature>
<reference key="1">
    <citation type="journal article" date="2008" name="Proc. Natl. Acad. Sci. U.S.A.">
        <title>Niche adaptation and genome expansion in the chlorophyll d-producing cyanobacterium Acaryochloris marina.</title>
        <authorList>
            <person name="Swingley W.D."/>
            <person name="Chen M."/>
            <person name="Cheung P.C."/>
            <person name="Conrad A.L."/>
            <person name="Dejesa L.C."/>
            <person name="Hao J."/>
            <person name="Honchak B.M."/>
            <person name="Karbach L.E."/>
            <person name="Kurdoglu A."/>
            <person name="Lahiri S."/>
            <person name="Mastrian S.D."/>
            <person name="Miyashita H."/>
            <person name="Page L."/>
            <person name="Ramakrishna P."/>
            <person name="Satoh S."/>
            <person name="Sattley W.M."/>
            <person name="Shimada Y."/>
            <person name="Taylor H.L."/>
            <person name="Tomo T."/>
            <person name="Tsuchiya T."/>
            <person name="Wang Z.T."/>
            <person name="Raymond J."/>
            <person name="Mimuro M."/>
            <person name="Blankenship R.E."/>
            <person name="Touchman J.W."/>
        </authorList>
    </citation>
    <scope>NUCLEOTIDE SEQUENCE [LARGE SCALE GENOMIC DNA]</scope>
    <source>
        <strain>MBIC 11017</strain>
    </source>
</reference>
<accession>B0CEZ1</accession>
<dbReference type="EC" id="5.6.1.7" evidence="1"/>
<dbReference type="EMBL" id="CP000828">
    <property type="protein sequence ID" value="ABW29388.1"/>
    <property type="molecule type" value="Genomic_DNA"/>
</dbReference>
<dbReference type="SMR" id="B0CEZ1"/>
<dbReference type="STRING" id="329726.AM1_4411"/>
<dbReference type="KEGG" id="amr:AM1_4411"/>
<dbReference type="eggNOG" id="COG0459">
    <property type="taxonomic scope" value="Bacteria"/>
</dbReference>
<dbReference type="HOGENOM" id="CLU_016503_3_0_3"/>
<dbReference type="OrthoDB" id="9766614at2"/>
<dbReference type="Proteomes" id="UP000000268">
    <property type="component" value="Chromosome"/>
</dbReference>
<dbReference type="GO" id="GO:0005737">
    <property type="term" value="C:cytoplasm"/>
    <property type="evidence" value="ECO:0007669"/>
    <property type="project" value="UniProtKB-SubCell"/>
</dbReference>
<dbReference type="GO" id="GO:0005524">
    <property type="term" value="F:ATP binding"/>
    <property type="evidence" value="ECO:0007669"/>
    <property type="project" value="UniProtKB-UniRule"/>
</dbReference>
<dbReference type="GO" id="GO:0140662">
    <property type="term" value="F:ATP-dependent protein folding chaperone"/>
    <property type="evidence" value="ECO:0007669"/>
    <property type="project" value="InterPro"/>
</dbReference>
<dbReference type="GO" id="GO:0016853">
    <property type="term" value="F:isomerase activity"/>
    <property type="evidence" value="ECO:0007669"/>
    <property type="project" value="UniProtKB-KW"/>
</dbReference>
<dbReference type="GO" id="GO:0051082">
    <property type="term" value="F:unfolded protein binding"/>
    <property type="evidence" value="ECO:0007669"/>
    <property type="project" value="UniProtKB-UniRule"/>
</dbReference>
<dbReference type="GO" id="GO:0042026">
    <property type="term" value="P:protein refolding"/>
    <property type="evidence" value="ECO:0007669"/>
    <property type="project" value="UniProtKB-UniRule"/>
</dbReference>
<dbReference type="CDD" id="cd03344">
    <property type="entry name" value="GroEL"/>
    <property type="match status" value="1"/>
</dbReference>
<dbReference type="FunFam" id="3.50.7.10:FF:000001">
    <property type="entry name" value="60 kDa chaperonin"/>
    <property type="match status" value="1"/>
</dbReference>
<dbReference type="Gene3D" id="3.50.7.10">
    <property type="entry name" value="GroEL"/>
    <property type="match status" value="1"/>
</dbReference>
<dbReference type="Gene3D" id="1.10.560.10">
    <property type="entry name" value="GroEL-like equatorial domain"/>
    <property type="match status" value="1"/>
</dbReference>
<dbReference type="Gene3D" id="3.30.260.10">
    <property type="entry name" value="TCP-1-like chaperonin intermediate domain"/>
    <property type="match status" value="1"/>
</dbReference>
<dbReference type="HAMAP" id="MF_00600">
    <property type="entry name" value="CH60"/>
    <property type="match status" value="1"/>
</dbReference>
<dbReference type="InterPro" id="IPR018370">
    <property type="entry name" value="Chaperonin_Cpn60_CS"/>
</dbReference>
<dbReference type="InterPro" id="IPR001844">
    <property type="entry name" value="Cpn60/GroEL"/>
</dbReference>
<dbReference type="InterPro" id="IPR002423">
    <property type="entry name" value="Cpn60/GroEL/TCP-1"/>
</dbReference>
<dbReference type="InterPro" id="IPR027409">
    <property type="entry name" value="GroEL-like_apical_dom_sf"/>
</dbReference>
<dbReference type="InterPro" id="IPR027413">
    <property type="entry name" value="GROEL-like_equatorial_sf"/>
</dbReference>
<dbReference type="InterPro" id="IPR027410">
    <property type="entry name" value="TCP-1-like_intermed_sf"/>
</dbReference>
<dbReference type="NCBIfam" id="TIGR02348">
    <property type="entry name" value="GroEL"/>
    <property type="match status" value="1"/>
</dbReference>
<dbReference type="NCBIfam" id="NF000592">
    <property type="entry name" value="PRK00013.1"/>
    <property type="match status" value="1"/>
</dbReference>
<dbReference type="NCBIfam" id="NF009487">
    <property type="entry name" value="PRK12849.1"/>
    <property type="match status" value="1"/>
</dbReference>
<dbReference type="NCBIfam" id="NF009488">
    <property type="entry name" value="PRK12850.1"/>
    <property type="match status" value="1"/>
</dbReference>
<dbReference type="NCBIfam" id="NF009489">
    <property type="entry name" value="PRK12851.1"/>
    <property type="match status" value="1"/>
</dbReference>
<dbReference type="PANTHER" id="PTHR45633">
    <property type="entry name" value="60 KDA HEAT SHOCK PROTEIN, MITOCHONDRIAL"/>
    <property type="match status" value="1"/>
</dbReference>
<dbReference type="Pfam" id="PF00118">
    <property type="entry name" value="Cpn60_TCP1"/>
    <property type="match status" value="1"/>
</dbReference>
<dbReference type="PRINTS" id="PR00298">
    <property type="entry name" value="CHAPERONIN60"/>
</dbReference>
<dbReference type="SUPFAM" id="SSF52029">
    <property type="entry name" value="GroEL apical domain-like"/>
    <property type="match status" value="1"/>
</dbReference>
<dbReference type="SUPFAM" id="SSF48592">
    <property type="entry name" value="GroEL equatorial domain-like"/>
    <property type="match status" value="1"/>
</dbReference>
<dbReference type="SUPFAM" id="SSF54849">
    <property type="entry name" value="GroEL-intermediate domain like"/>
    <property type="match status" value="1"/>
</dbReference>
<dbReference type="PROSITE" id="PS00296">
    <property type="entry name" value="CHAPERONINS_CPN60"/>
    <property type="match status" value="1"/>
</dbReference>
<keyword id="KW-0067">ATP-binding</keyword>
<keyword id="KW-0143">Chaperone</keyword>
<keyword id="KW-0963">Cytoplasm</keyword>
<keyword id="KW-0413">Isomerase</keyword>
<keyword id="KW-0547">Nucleotide-binding</keyword>
<keyword id="KW-1185">Reference proteome</keyword>
<organism>
    <name type="scientific">Acaryochloris marina (strain MBIC 11017)</name>
    <dbReference type="NCBI Taxonomy" id="329726"/>
    <lineage>
        <taxon>Bacteria</taxon>
        <taxon>Bacillati</taxon>
        <taxon>Cyanobacteriota</taxon>
        <taxon>Cyanophyceae</taxon>
        <taxon>Acaryochloridales</taxon>
        <taxon>Acaryochloridaceae</taxon>
        <taxon>Acaryochloris</taxon>
    </lineage>
</organism>
<protein>
    <recommendedName>
        <fullName evidence="1">Chaperonin GroEL 2</fullName>
        <ecNumber evidence="1">5.6.1.7</ecNumber>
    </recommendedName>
    <alternativeName>
        <fullName evidence="1">60 kDa chaperonin 2</fullName>
    </alternativeName>
    <alternativeName>
        <fullName evidence="1">Chaperonin-60 2</fullName>
        <shortName evidence="1">Cpn60 2</shortName>
    </alternativeName>
</protein>
<evidence type="ECO:0000255" key="1">
    <source>
        <dbReference type="HAMAP-Rule" id="MF_00600"/>
    </source>
</evidence>
<evidence type="ECO:0000256" key="2">
    <source>
        <dbReference type="SAM" id="MobiDB-lite"/>
    </source>
</evidence>
<comment type="function">
    <text evidence="1">Together with its co-chaperonin GroES, plays an essential role in assisting protein folding. The GroEL-GroES system forms a nano-cage that allows encapsulation of the non-native substrate proteins and provides a physical environment optimized to promote and accelerate protein folding.</text>
</comment>
<comment type="catalytic activity">
    <reaction evidence="1">
        <text>ATP + H2O + a folded polypeptide = ADP + phosphate + an unfolded polypeptide.</text>
        <dbReference type="EC" id="5.6.1.7"/>
    </reaction>
</comment>
<comment type="subunit">
    <text evidence="1">Forms a cylinder of 14 subunits composed of two heptameric rings stacked back-to-back. Interacts with the co-chaperonin GroES.</text>
</comment>
<comment type="subcellular location">
    <subcellularLocation>
        <location evidence="1">Cytoplasm</location>
    </subcellularLocation>
</comment>
<comment type="similarity">
    <text evidence="1">Belongs to the chaperonin (HSP60) family.</text>
</comment>
<sequence>MAKRIIYNENARRALEKGMDILCESVAVTLGPKGRNVVLEKKFGAPQIVNDGVTIAKEIELEDNIENTGVALIRQAASKTNDAAGDGTTTATVLAHAMVKEGMRNVVAGANAISLKRGIEKAAGFLVEKIAENARSVEDSTAIAQVGTISAGNDDEVGQMIANAMDKVGKEGVISLEEGKSMTTELEVTEGMRFEKGYISPYFATDTERMEAVLDEPYILLTDKKITLVQDLVPVLEQAARAGKPLLVIAEDIEKEALATLVVNRLRGVLNVAAVKAPGFGDRRKAMLEDIAVLTGGQVITEDAGLKLETAKLEMMGQARRITITKDTTTLVAEGNEADVQARCEQIRRQMDETESSYDKEKLQERLAKLAGGVAVIKVGAATETEMKDRKLRLEDAINSTKAAVEEGIVPGGGTTLAHLGPQLASWAADNLTGEELIGATIVERALTAPLKRIAENAGQNGAVIAERVREKEFNVGFDASVNEFTDMFAAGIVDPAKVTRSALQNAASIAGMVLTTECIISDKPEPKENAPTGAGMGGDFDY</sequence>